<proteinExistence type="inferred from homology"/>
<evidence type="ECO:0000255" key="1">
    <source>
        <dbReference type="HAMAP-Rule" id="MF_00821"/>
    </source>
</evidence>
<feature type="chain" id="PRO_1000062482" description="Protein-export protein SecB">
    <location>
        <begin position="1"/>
        <end position="155"/>
    </location>
</feature>
<keyword id="KW-0143">Chaperone</keyword>
<keyword id="KW-0963">Cytoplasm</keyword>
<keyword id="KW-0653">Protein transport</keyword>
<keyword id="KW-0811">Translocation</keyword>
<keyword id="KW-0813">Transport</keyword>
<accession>A6TFK4</accession>
<protein>
    <recommendedName>
        <fullName evidence="1">Protein-export protein SecB</fullName>
    </recommendedName>
</protein>
<gene>
    <name evidence="1" type="primary">secB</name>
    <name type="ordered locus">KPN78578_39140</name>
    <name type="ORF">KPN_03953</name>
</gene>
<reference key="1">
    <citation type="submission" date="2006-09" db="EMBL/GenBank/DDBJ databases">
        <authorList>
            <consortium name="The Klebsiella pneumonia Genome Sequencing Project"/>
            <person name="McClelland M."/>
            <person name="Sanderson E.K."/>
            <person name="Spieth J."/>
            <person name="Clifton W.S."/>
            <person name="Latreille P."/>
            <person name="Sabo A."/>
            <person name="Pepin K."/>
            <person name="Bhonagiri V."/>
            <person name="Porwollik S."/>
            <person name="Ali J."/>
            <person name="Wilson R.K."/>
        </authorList>
    </citation>
    <scope>NUCLEOTIDE SEQUENCE [LARGE SCALE GENOMIC DNA]</scope>
    <source>
        <strain>ATCC 700721 / MGH 78578</strain>
    </source>
</reference>
<name>SECB_KLEP7</name>
<sequence length="155" mass="17190">MSEQNSTEMTFQIQRIYTKDISFEAPNAPQVFQKDWQPEVKLDLDTASTQLAEGVYEVVLRVTVTAALGEETAFLCEVQQGGIFSIDGIEGTQMAHCLGAYCPNILFPYARECITSLVSRGTFPQLNLAPVNFDALFMNYLQQQAGEGAEQHQDA</sequence>
<comment type="function">
    <text evidence="1">One of the proteins required for the normal export of preproteins out of the cell cytoplasm. It is a molecular chaperone that binds to a subset of precursor proteins, maintaining them in a translocation-competent state. It also specifically binds to its receptor SecA.</text>
</comment>
<comment type="subunit">
    <text evidence="1">Homotetramer, a dimer of dimers. One homotetramer interacts with 1 SecA dimer.</text>
</comment>
<comment type="subcellular location">
    <subcellularLocation>
        <location evidence="1">Cytoplasm</location>
    </subcellularLocation>
</comment>
<comment type="similarity">
    <text evidence="1">Belongs to the SecB family.</text>
</comment>
<organism>
    <name type="scientific">Klebsiella pneumoniae subsp. pneumoniae (strain ATCC 700721 / MGH 78578)</name>
    <dbReference type="NCBI Taxonomy" id="272620"/>
    <lineage>
        <taxon>Bacteria</taxon>
        <taxon>Pseudomonadati</taxon>
        <taxon>Pseudomonadota</taxon>
        <taxon>Gammaproteobacteria</taxon>
        <taxon>Enterobacterales</taxon>
        <taxon>Enterobacteriaceae</taxon>
        <taxon>Klebsiella/Raoultella group</taxon>
        <taxon>Klebsiella</taxon>
        <taxon>Klebsiella pneumoniae complex</taxon>
    </lineage>
</organism>
<dbReference type="EMBL" id="CP000647">
    <property type="protein sequence ID" value="ABR79338.1"/>
    <property type="molecule type" value="Genomic_DNA"/>
</dbReference>
<dbReference type="RefSeq" id="WP_002922428.1">
    <property type="nucleotide sequence ID" value="NC_009648.1"/>
</dbReference>
<dbReference type="SMR" id="A6TFK4"/>
<dbReference type="STRING" id="272620.KPN_03953"/>
<dbReference type="jPOST" id="A6TFK4"/>
<dbReference type="PaxDb" id="272620-KPN_03953"/>
<dbReference type="EnsemblBacteria" id="ABR79338">
    <property type="protein sequence ID" value="ABR79338"/>
    <property type="gene ID" value="KPN_03953"/>
</dbReference>
<dbReference type="GeneID" id="93270727"/>
<dbReference type="KEGG" id="kpn:KPN_03953"/>
<dbReference type="HOGENOM" id="CLU_111574_1_0_6"/>
<dbReference type="Proteomes" id="UP000000265">
    <property type="component" value="Chromosome"/>
</dbReference>
<dbReference type="GO" id="GO:0005737">
    <property type="term" value="C:cytoplasm"/>
    <property type="evidence" value="ECO:0007669"/>
    <property type="project" value="UniProtKB-SubCell"/>
</dbReference>
<dbReference type="GO" id="GO:0051082">
    <property type="term" value="F:unfolded protein binding"/>
    <property type="evidence" value="ECO:0007669"/>
    <property type="project" value="InterPro"/>
</dbReference>
<dbReference type="GO" id="GO:0006457">
    <property type="term" value="P:protein folding"/>
    <property type="evidence" value="ECO:0007669"/>
    <property type="project" value="UniProtKB-UniRule"/>
</dbReference>
<dbReference type="GO" id="GO:0051262">
    <property type="term" value="P:protein tetramerization"/>
    <property type="evidence" value="ECO:0007669"/>
    <property type="project" value="InterPro"/>
</dbReference>
<dbReference type="GO" id="GO:0015031">
    <property type="term" value="P:protein transport"/>
    <property type="evidence" value="ECO:0007669"/>
    <property type="project" value="UniProtKB-UniRule"/>
</dbReference>
<dbReference type="CDD" id="cd00557">
    <property type="entry name" value="Translocase_SecB"/>
    <property type="match status" value="1"/>
</dbReference>
<dbReference type="FunFam" id="3.10.420.10:FF:000001">
    <property type="entry name" value="Protein-export chaperone SecB"/>
    <property type="match status" value="1"/>
</dbReference>
<dbReference type="Gene3D" id="3.10.420.10">
    <property type="entry name" value="SecB-like"/>
    <property type="match status" value="1"/>
</dbReference>
<dbReference type="HAMAP" id="MF_00821">
    <property type="entry name" value="SecB"/>
    <property type="match status" value="1"/>
</dbReference>
<dbReference type="InterPro" id="IPR003708">
    <property type="entry name" value="SecB"/>
</dbReference>
<dbReference type="InterPro" id="IPR035958">
    <property type="entry name" value="SecB-like_sf"/>
</dbReference>
<dbReference type="NCBIfam" id="NF004390">
    <property type="entry name" value="PRK05751.1-1"/>
    <property type="match status" value="1"/>
</dbReference>
<dbReference type="NCBIfam" id="NF004393">
    <property type="entry name" value="PRK05751.1-4"/>
    <property type="match status" value="1"/>
</dbReference>
<dbReference type="NCBIfam" id="TIGR00809">
    <property type="entry name" value="secB"/>
    <property type="match status" value="1"/>
</dbReference>
<dbReference type="PANTHER" id="PTHR36918">
    <property type="match status" value="1"/>
</dbReference>
<dbReference type="PANTHER" id="PTHR36918:SF1">
    <property type="entry name" value="PROTEIN-EXPORT PROTEIN SECB"/>
    <property type="match status" value="1"/>
</dbReference>
<dbReference type="Pfam" id="PF02556">
    <property type="entry name" value="SecB"/>
    <property type="match status" value="1"/>
</dbReference>
<dbReference type="PRINTS" id="PR01594">
    <property type="entry name" value="SECBCHAPRONE"/>
</dbReference>
<dbReference type="SUPFAM" id="SSF54611">
    <property type="entry name" value="SecB-like"/>
    <property type="match status" value="1"/>
</dbReference>